<protein>
    <recommendedName>
        <fullName>Protein crossbronx-like</fullName>
    </recommendedName>
</protein>
<feature type="chain" id="PRO_0000379050" description="Protein crossbronx-like">
    <location>
        <begin position="1"/>
        <end position="256"/>
    </location>
</feature>
<feature type="domain" description="UBC core" evidence="1">
    <location>
        <begin position="17"/>
        <end position="179"/>
    </location>
</feature>
<gene>
    <name type="ORF">GJ21397</name>
</gene>
<sequence>MCLETIPTNNKTLALINQGYKVLAEYQMIEQKQLKGIYAIPSYSSGLLWFGVIFIHSGLYAESVFRFSILLPDQFPEESSLPTVIFQKDIFHPHICPVSHSLDLTPLLKEWKKDQHHIWHILKYIQAIFADPEGSVCSTQNGDPIPLTEVNNMEAMRLLANNRVDFAVRAKVSILWSCQHMFDEPPIKDPHYIIFERYCPEKHQAMMERLKSRSWYELSAPKTPKPSVCVARMESARQLIEDEEAQVVNAAGSSLN</sequence>
<proteinExistence type="inferred from homology"/>
<dbReference type="EMBL" id="CH940648">
    <property type="protein sequence ID" value="EDW60286.1"/>
    <property type="molecule type" value="Genomic_DNA"/>
</dbReference>
<dbReference type="SMR" id="B4LPP8"/>
<dbReference type="FunCoup" id="B4LPP8">
    <property type="interactions" value="63"/>
</dbReference>
<dbReference type="STRING" id="7244.B4LPP8"/>
<dbReference type="EnsemblMetazoa" id="FBtr0237322">
    <property type="protein sequence ID" value="FBpp0235814"/>
    <property type="gene ID" value="FBgn0208523"/>
</dbReference>
<dbReference type="EnsemblMetazoa" id="XM_002049057.3">
    <property type="protein sequence ID" value="XP_002049093.1"/>
    <property type="gene ID" value="LOC6626722"/>
</dbReference>
<dbReference type="GeneID" id="6626722"/>
<dbReference type="KEGG" id="dvi:6626722"/>
<dbReference type="eggNOG" id="KOG0429">
    <property type="taxonomic scope" value="Eukaryota"/>
</dbReference>
<dbReference type="HOGENOM" id="CLU_083049_2_0_1"/>
<dbReference type="InParanoid" id="B4LPP8"/>
<dbReference type="OMA" id="DQHHIWH"/>
<dbReference type="OrthoDB" id="5596422at2759"/>
<dbReference type="PhylomeDB" id="B4LPP8"/>
<dbReference type="Proteomes" id="UP000008792">
    <property type="component" value="Unassembled WGS sequence"/>
</dbReference>
<dbReference type="CDD" id="cd23814">
    <property type="entry name" value="UEV_AKTIP"/>
    <property type="match status" value="1"/>
</dbReference>
<dbReference type="Gene3D" id="3.10.110.10">
    <property type="entry name" value="Ubiquitin Conjugating Enzyme"/>
    <property type="match status" value="1"/>
</dbReference>
<dbReference type="InterPro" id="IPR000608">
    <property type="entry name" value="UBQ-conjugat_E2_core"/>
</dbReference>
<dbReference type="InterPro" id="IPR016135">
    <property type="entry name" value="UBQ-conjugating_enzyme/RWD"/>
</dbReference>
<dbReference type="Pfam" id="PF00179">
    <property type="entry name" value="UQ_con"/>
    <property type="match status" value="1"/>
</dbReference>
<dbReference type="SMART" id="SM00212">
    <property type="entry name" value="UBCc"/>
    <property type="match status" value="1"/>
</dbReference>
<dbReference type="SUPFAM" id="SSF54495">
    <property type="entry name" value="UBC-like"/>
    <property type="match status" value="1"/>
</dbReference>
<dbReference type="PROSITE" id="PS50127">
    <property type="entry name" value="UBC_2"/>
    <property type="match status" value="1"/>
</dbReference>
<keyword id="KW-1185">Reference proteome</keyword>
<accession>B4LPP8</accession>
<evidence type="ECO:0000255" key="1">
    <source>
        <dbReference type="PROSITE-ProRule" id="PRU00388"/>
    </source>
</evidence>
<evidence type="ECO:0000305" key="2"/>
<comment type="similarity">
    <text evidence="1">Belongs to the ubiquitin-conjugating enzyme family. FTS subfamily.</text>
</comment>
<comment type="caution">
    <text evidence="2">Lacks the conserved Cys residue necessary for ubiquitin-conjugating enzyme E2 activity.</text>
</comment>
<reference key="1">
    <citation type="journal article" date="2007" name="Nature">
        <title>Evolution of genes and genomes on the Drosophila phylogeny.</title>
        <authorList>
            <consortium name="Drosophila 12 genomes consortium"/>
        </authorList>
    </citation>
    <scope>NUCLEOTIDE SEQUENCE [LARGE SCALE GENOMIC DNA]</scope>
    <source>
        <strain>Tucson 15010-1051.87</strain>
    </source>
</reference>
<name>AKTP2_DROVI</name>
<organism>
    <name type="scientific">Drosophila virilis</name>
    <name type="common">Fruit fly</name>
    <dbReference type="NCBI Taxonomy" id="7244"/>
    <lineage>
        <taxon>Eukaryota</taxon>
        <taxon>Metazoa</taxon>
        <taxon>Ecdysozoa</taxon>
        <taxon>Arthropoda</taxon>
        <taxon>Hexapoda</taxon>
        <taxon>Insecta</taxon>
        <taxon>Pterygota</taxon>
        <taxon>Neoptera</taxon>
        <taxon>Endopterygota</taxon>
        <taxon>Diptera</taxon>
        <taxon>Brachycera</taxon>
        <taxon>Muscomorpha</taxon>
        <taxon>Ephydroidea</taxon>
        <taxon>Drosophilidae</taxon>
        <taxon>Drosophila</taxon>
    </lineage>
</organism>